<dbReference type="EMBL" id="CP000849">
    <property type="protein sequence ID" value="ABV79763.1"/>
    <property type="molecule type" value="Genomic_DNA"/>
</dbReference>
<dbReference type="RefSeq" id="WP_011476817.1">
    <property type="nucleotide sequence ID" value="NC_009883.1"/>
</dbReference>
<dbReference type="SMR" id="A8GY13"/>
<dbReference type="KEGG" id="rbo:A1I_07325"/>
<dbReference type="HOGENOM" id="CLU_148710_2_1_5"/>
<dbReference type="GO" id="GO:0022627">
    <property type="term" value="C:cytosolic small ribosomal subunit"/>
    <property type="evidence" value="ECO:0007669"/>
    <property type="project" value="TreeGrafter"/>
</dbReference>
<dbReference type="GO" id="GO:0070181">
    <property type="term" value="F:small ribosomal subunit rRNA binding"/>
    <property type="evidence" value="ECO:0007669"/>
    <property type="project" value="TreeGrafter"/>
</dbReference>
<dbReference type="GO" id="GO:0003735">
    <property type="term" value="F:structural constituent of ribosome"/>
    <property type="evidence" value="ECO:0007669"/>
    <property type="project" value="InterPro"/>
</dbReference>
<dbReference type="GO" id="GO:0006412">
    <property type="term" value="P:translation"/>
    <property type="evidence" value="ECO:0007669"/>
    <property type="project" value="UniProtKB-UniRule"/>
</dbReference>
<dbReference type="Gene3D" id="4.10.640.10">
    <property type="entry name" value="Ribosomal protein S18"/>
    <property type="match status" value="1"/>
</dbReference>
<dbReference type="HAMAP" id="MF_00270">
    <property type="entry name" value="Ribosomal_bS18"/>
    <property type="match status" value="1"/>
</dbReference>
<dbReference type="InterPro" id="IPR001648">
    <property type="entry name" value="Ribosomal_bS18"/>
</dbReference>
<dbReference type="InterPro" id="IPR018275">
    <property type="entry name" value="Ribosomal_bS18_CS"/>
</dbReference>
<dbReference type="InterPro" id="IPR036870">
    <property type="entry name" value="Ribosomal_bS18_sf"/>
</dbReference>
<dbReference type="NCBIfam" id="TIGR00165">
    <property type="entry name" value="S18"/>
    <property type="match status" value="1"/>
</dbReference>
<dbReference type="PANTHER" id="PTHR13479">
    <property type="entry name" value="30S RIBOSOMAL PROTEIN S18"/>
    <property type="match status" value="1"/>
</dbReference>
<dbReference type="PANTHER" id="PTHR13479:SF40">
    <property type="entry name" value="SMALL RIBOSOMAL SUBUNIT PROTEIN BS18M"/>
    <property type="match status" value="1"/>
</dbReference>
<dbReference type="Pfam" id="PF01084">
    <property type="entry name" value="Ribosomal_S18"/>
    <property type="match status" value="1"/>
</dbReference>
<dbReference type="PRINTS" id="PR00974">
    <property type="entry name" value="RIBOSOMALS18"/>
</dbReference>
<dbReference type="SUPFAM" id="SSF46911">
    <property type="entry name" value="Ribosomal protein S18"/>
    <property type="match status" value="1"/>
</dbReference>
<dbReference type="PROSITE" id="PS00057">
    <property type="entry name" value="RIBOSOMAL_S18"/>
    <property type="match status" value="1"/>
</dbReference>
<comment type="function">
    <text evidence="1">Binds as a heterodimer with protein bS6 to the central domain of the 16S rRNA, where it helps stabilize the platform of the 30S subunit.</text>
</comment>
<comment type="subunit">
    <text evidence="1">Part of the 30S ribosomal subunit. Forms a tight heterodimer with protein bS6.</text>
</comment>
<comment type="similarity">
    <text evidence="1">Belongs to the bacterial ribosomal protein bS18 family.</text>
</comment>
<reference key="1">
    <citation type="submission" date="2007-09" db="EMBL/GenBank/DDBJ databases">
        <title>Complete genome sequencing of Rickettsia bellii.</title>
        <authorList>
            <person name="Madan A."/>
            <person name="Lee H."/>
            <person name="Madan A."/>
            <person name="Yoon J.-G."/>
            <person name="Ryu G.-Y."/>
            <person name="Dasch G."/>
            <person name="Ereemeva M."/>
        </authorList>
    </citation>
    <scope>NUCLEOTIDE SEQUENCE [LARGE SCALE GENOMIC DNA]</scope>
    <source>
        <strain>OSU 85-389</strain>
    </source>
</reference>
<sequence length="94" mass="10715">MSKNNTSETITRKPMERASKKVFFRRRKGCPLSVPNAPVIDYKNPELLIKFVSEGGRMLPSRITNVCAKKQRKLNNAIKIARILALLPFVFQAK</sequence>
<organism>
    <name type="scientific">Rickettsia bellii (strain OSU 85-389)</name>
    <dbReference type="NCBI Taxonomy" id="391896"/>
    <lineage>
        <taxon>Bacteria</taxon>
        <taxon>Pseudomonadati</taxon>
        <taxon>Pseudomonadota</taxon>
        <taxon>Alphaproteobacteria</taxon>
        <taxon>Rickettsiales</taxon>
        <taxon>Rickettsiaceae</taxon>
        <taxon>Rickettsieae</taxon>
        <taxon>Rickettsia</taxon>
        <taxon>belli group</taxon>
    </lineage>
</organism>
<evidence type="ECO:0000255" key="1">
    <source>
        <dbReference type="HAMAP-Rule" id="MF_00270"/>
    </source>
</evidence>
<evidence type="ECO:0000305" key="2"/>
<feature type="chain" id="PRO_1000003592" description="Small ribosomal subunit protein bS18">
    <location>
        <begin position="1"/>
        <end position="94"/>
    </location>
</feature>
<protein>
    <recommendedName>
        <fullName evidence="1">Small ribosomal subunit protein bS18</fullName>
    </recommendedName>
    <alternativeName>
        <fullName evidence="2">30S ribosomal protein S18</fullName>
    </alternativeName>
</protein>
<proteinExistence type="inferred from homology"/>
<name>RS18_RICB8</name>
<accession>A8GY13</accession>
<keyword id="KW-0687">Ribonucleoprotein</keyword>
<keyword id="KW-0689">Ribosomal protein</keyword>
<keyword id="KW-0694">RNA-binding</keyword>
<keyword id="KW-0699">rRNA-binding</keyword>
<gene>
    <name evidence="1" type="primary">rpsR</name>
    <name type="ordered locus">A1I_07325</name>
</gene>